<gene>
    <name evidence="1" type="primary">mdtB</name>
    <name type="ordered locus">YPO2848</name>
    <name type="ordered locus">y1385</name>
    <name type="ordered locus">YP_2715</name>
</gene>
<proteinExistence type="inferred from homology"/>
<evidence type="ECO:0000255" key="1">
    <source>
        <dbReference type="HAMAP-Rule" id="MF_01423"/>
    </source>
</evidence>
<evidence type="ECO:0000256" key="2">
    <source>
        <dbReference type="SAM" id="MobiDB-lite"/>
    </source>
</evidence>
<organism>
    <name type="scientific">Yersinia pestis</name>
    <dbReference type="NCBI Taxonomy" id="632"/>
    <lineage>
        <taxon>Bacteria</taxon>
        <taxon>Pseudomonadati</taxon>
        <taxon>Pseudomonadota</taxon>
        <taxon>Gammaproteobacteria</taxon>
        <taxon>Enterobacterales</taxon>
        <taxon>Yersiniaceae</taxon>
        <taxon>Yersinia</taxon>
    </lineage>
</organism>
<comment type="subunit">
    <text evidence="1">Part of a tripartite efflux system composed of MdtA, MdtB and MdtC. MdtB forms a heteromultimer with MdtC.</text>
</comment>
<comment type="subcellular location">
    <subcellularLocation>
        <location evidence="1">Cell inner membrane</location>
        <topology evidence="1">Multi-pass membrane protein</topology>
    </subcellularLocation>
</comment>
<comment type="similarity">
    <text evidence="1">Belongs to the resistance-nodulation-cell division (RND) (TC 2.A.6) family. MdtB subfamily.</text>
</comment>
<protein>
    <recommendedName>
        <fullName evidence="1">Multidrug resistance protein MdtB</fullName>
    </recommendedName>
    <alternativeName>
        <fullName evidence="1">Multidrug transporter MdtB</fullName>
    </alternativeName>
</protein>
<dbReference type="EMBL" id="AL590842">
    <property type="protein sequence ID" value="CAL21460.1"/>
    <property type="molecule type" value="Genomic_DNA"/>
</dbReference>
<dbReference type="EMBL" id="AE009952">
    <property type="protein sequence ID" value="AAM84957.1"/>
    <property type="molecule type" value="Genomic_DNA"/>
</dbReference>
<dbReference type="EMBL" id="AE017042">
    <property type="protein sequence ID" value="AAS62904.1"/>
    <property type="molecule type" value="Genomic_DNA"/>
</dbReference>
<dbReference type="PIR" id="AI0346">
    <property type="entry name" value="AI0346"/>
</dbReference>
<dbReference type="RefSeq" id="WP_002209793.1">
    <property type="nucleotide sequence ID" value="NZ_WUCM01000037.1"/>
</dbReference>
<dbReference type="RefSeq" id="YP_002347786.1">
    <property type="nucleotide sequence ID" value="NC_003143.1"/>
</dbReference>
<dbReference type="SMR" id="Q8ZCW0"/>
<dbReference type="IntAct" id="Q8ZCW0">
    <property type="interactions" value="12"/>
</dbReference>
<dbReference type="STRING" id="214092.YPO2848"/>
<dbReference type="PaxDb" id="214092-YPO2848"/>
<dbReference type="DNASU" id="1146332"/>
<dbReference type="EnsemblBacteria" id="AAS62904">
    <property type="protein sequence ID" value="AAS62904"/>
    <property type="gene ID" value="YP_2715"/>
</dbReference>
<dbReference type="KEGG" id="ype:YPO2848"/>
<dbReference type="KEGG" id="ypk:y1385"/>
<dbReference type="KEGG" id="ypm:YP_2715"/>
<dbReference type="PATRIC" id="fig|214092.21.peg.3292"/>
<dbReference type="eggNOG" id="COG0841">
    <property type="taxonomic scope" value="Bacteria"/>
</dbReference>
<dbReference type="HOGENOM" id="CLU_002755_1_2_6"/>
<dbReference type="OMA" id="VPMMCAK"/>
<dbReference type="OrthoDB" id="9757904at2"/>
<dbReference type="Proteomes" id="UP000000815">
    <property type="component" value="Chromosome"/>
</dbReference>
<dbReference type="Proteomes" id="UP000001019">
    <property type="component" value="Chromosome"/>
</dbReference>
<dbReference type="Proteomes" id="UP000002490">
    <property type="component" value="Chromosome"/>
</dbReference>
<dbReference type="GO" id="GO:0005886">
    <property type="term" value="C:plasma membrane"/>
    <property type="evidence" value="ECO:0000318"/>
    <property type="project" value="GO_Central"/>
</dbReference>
<dbReference type="GO" id="GO:0042910">
    <property type="term" value="F:xenobiotic transmembrane transporter activity"/>
    <property type="evidence" value="ECO:0000318"/>
    <property type="project" value="GO_Central"/>
</dbReference>
<dbReference type="FunFam" id="1.20.1640.10:FF:000001">
    <property type="entry name" value="Efflux pump membrane transporter"/>
    <property type="match status" value="1"/>
</dbReference>
<dbReference type="FunFam" id="3.30.70.1430:FF:000001">
    <property type="entry name" value="Efflux pump membrane transporter"/>
    <property type="match status" value="1"/>
</dbReference>
<dbReference type="Gene3D" id="3.30.70.1430">
    <property type="entry name" value="Multidrug efflux transporter AcrB pore domain"/>
    <property type="match status" value="2"/>
</dbReference>
<dbReference type="Gene3D" id="3.30.70.1440">
    <property type="entry name" value="Multidrug efflux transporter AcrB pore domain"/>
    <property type="match status" value="1"/>
</dbReference>
<dbReference type="Gene3D" id="3.30.70.1320">
    <property type="entry name" value="Multidrug efflux transporter AcrB pore domain like"/>
    <property type="match status" value="1"/>
</dbReference>
<dbReference type="Gene3D" id="3.30.2090.10">
    <property type="entry name" value="Multidrug efflux transporter AcrB TolC docking domain, DN and DC subdomains"/>
    <property type="match status" value="2"/>
</dbReference>
<dbReference type="Gene3D" id="1.20.1640.10">
    <property type="entry name" value="Multidrug efflux transporter AcrB transmembrane domain"/>
    <property type="match status" value="2"/>
</dbReference>
<dbReference type="HAMAP" id="MF_01423">
    <property type="entry name" value="MdtB"/>
    <property type="match status" value="1"/>
</dbReference>
<dbReference type="InterPro" id="IPR027463">
    <property type="entry name" value="AcrB_DN_DC_subdom"/>
</dbReference>
<dbReference type="InterPro" id="IPR001036">
    <property type="entry name" value="Acrflvin-R"/>
</dbReference>
<dbReference type="InterPro" id="IPR022831">
    <property type="entry name" value="Multidrug-R_MdtB"/>
</dbReference>
<dbReference type="NCBIfam" id="NF007798">
    <property type="entry name" value="PRK10503.1"/>
    <property type="match status" value="1"/>
</dbReference>
<dbReference type="NCBIfam" id="NF033617">
    <property type="entry name" value="RND_permease_2"/>
    <property type="match status" value="1"/>
</dbReference>
<dbReference type="PANTHER" id="PTHR32063">
    <property type="match status" value="1"/>
</dbReference>
<dbReference type="PANTHER" id="PTHR32063:SF21">
    <property type="entry name" value="MULTIDRUG RESISTANCE PROTEIN MDTB"/>
    <property type="match status" value="1"/>
</dbReference>
<dbReference type="Pfam" id="PF00873">
    <property type="entry name" value="ACR_tran"/>
    <property type="match status" value="1"/>
</dbReference>
<dbReference type="PRINTS" id="PR00702">
    <property type="entry name" value="ACRIFLAVINRP"/>
</dbReference>
<dbReference type="SUPFAM" id="SSF82693">
    <property type="entry name" value="Multidrug efflux transporter AcrB pore domain, PN1, PN2, PC1 and PC2 subdomains"/>
    <property type="match status" value="3"/>
</dbReference>
<dbReference type="SUPFAM" id="SSF82714">
    <property type="entry name" value="Multidrug efflux transporter AcrB TolC docking domain, DN and DC subdomains"/>
    <property type="match status" value="2"/>
</dbReference>
<dbReference type="SUPFAM" id="SSF82866">
    <property type="entry name" value="Multidrug efflux transporter AcrB transmembrane domain"/>
    <property type="match status" value="2"/>
</dbReference>
<keyword id="KW-0997">Cell inner membrane</keyword>
<keyword id="KW-1003">Cell membrane</keyword>
<keyword id="KW-0472">Membrane</keyword>
<keyword id="KW-1185">Reference proteome</keyword>
<keyword id="KW-0812">Transmembrane</keyword>
<keyword id="KW-1133">Transmembrane helix</keyword>
<keyword id="KW-0813">Transport</keyword>
<feature type="chain" id="PRO_0000161829" description="Multidrug resistance protein MdtB">
    <location>
        <begin position="1"/>
        <end position="1052"/>
    </location>
</feature>
<feature type="transmembrane region" description="Helical" evidence="1">
    <location>
        <begin position="15"/>
        <end position="37"/>
    </location>
</feature>
<feature type="transmembrane region" description="Helical" evidence="1">
    <location>
        <begin position="345"/>
        <end position="362"/>
    </location>
</feature>
<feature type="transmembrane region" description="Helical" evidence="1">
    <location>
        <begin position="367"/>
        <end position="389"/>
    </location>
</feature>
<feature type="transmembrane region" description="Helical" evidence="1">
    <location>
        <begin position="396"/>
        <end position="418"/>
    </location>
</feature>
<feature type="transmembrane region" description="Helical" evidence="1">
    <location>
        <begin position="438"/>
        <end position="460"/>
    </location>
</feature>
<feature type="transmembrane region" description="Helical" evidence="1">
    <location>
        <begin position="472"/>
        <end position="494"/>
    </location>
</feature>
<feature type="transmembrane region" description="Helical" evidence="1">
    <location>
        <begin position="535"/>
        <end position="557"/>
    </location>
</feature>
<feature type="transmembrane region" description="Helical" evidence="1">
    <location>
        <begin position="867"/>
        <end position="889"/>
    </location>
</feature>
<feature type="transmembrane region" description="Helical" evidence="1">
    <location>
        <begin position="909"/>
        <end position="931"/>
    </location>
</feature>
<feature type="transmembrane region" description="Helical" evidence="1">
    <location>
        <begin position="968"/>
        <end position="990"/>
    </location>
</feature>
<feature type="transmembrane region" description="Helical" evidence="1">
    <location>
        <begin position="1000"/>
        <end position="1022"/>
    </location>
</feature>
<feature type="region of interest" description="Disordered" evidence="2">
    <location>
        <begin position="1032"/>
        <end position="1052"/>
    </location>
</feature>
<accession>Q8ZCW0</accession>
<accession>Q0WD52</accession>
<accession>Q74SA7</accession>
<accession>Q7CJK9</accession>
<sequence>MQVMPPTPGGGPSRLFILRPVATTLFMIAILLAGIIGYRALPVSALPEVDYPTIQVVTLYPGASPDVVTSSITAPLERQFGQMSGLKQMASQSSGGASVITLQFQLTLPLDVAEQEVQAAINAATNLLPSDLPYPPIYNKVNPADPPILTLAVTATAIPMTQVEDMVETRIAQKISQVTGVGLVTLSGGQRPAVRVKLNAPAVAALGLDSETIRTAISNANVNSAKGSLDGPTRSVTLSANDQMKSAEEYRDLIIAYQNGAPIRLQDVATIEQGAENNKLAAWANTQSAIVLNIQRQPGVNVIATADSIREMLPELIKSLPKSVDVKVLTDRTSTIRASVNDVQFELLLAIALVVMVIYLFLRNAAATIIPSIAVPLSLVGTFAAMYFLGFSINNLTLMALTIATGFVVDDAIVVIENISRYIEKGEKPLDAALKGAGEIGFTIISLTFSLIAVLIPLLFMEDIVGRLFREFAVTLAVAILISAVVSLTLTPMMCARMLSYESLRKQNRLSRASEKFFDWVIAHYAVALKKVLNHPWLTLSVAFSTLVLTVILYLLIPKGFFPLQDNGLIQGTLEAPQSVSFSNMAERQQQVAAIILKDPAVESLTSFVGVDGTNATLNNGRLQINLKPLSERDDRIPQIITRLQESVSGVPGIKLYLQPVQDLTIDTQLSRTQYQFTLQATSLEELSTWVPKLVNELQQKAPFQDVTSDWQDQGLVAFVNVDRDSASRLGITMAAIDNALYNAFGQRLISTIYTQSNQYRVVLEHDVQATPGLAAFNDIRLTGIDGKGVPLSSIATIEERFGPLSINHLNQFPSATVSFNLAQGYSLGEAVAAVTLAEKEIQLPADITTRFQGSTLAFQAALGSTLWLIIAAIVAMYIVLGVLYESFIHPITILSTLPTAGVGALLALMLTGNELDVIAIIGIILLIGIVKKNAIMMIDFALAAERDQGMTPYDAIYQACLLRFRPILMTTLAALFGALPLMLSTGVGAELRQPLGVCMVGGLIVSQVLTLFTTPVIYLLFDKLARNTRGKNRHRDEDIDSSELLNGQEPQ</sequence>
<name>MDTB_YERPE</name>
<reference key="1">
    <citation type="journal article" date="2001" name="Nature">
        <title>Genome sequence of Yersinia pestis, the causative agent of plague.</title>
        <authorList>
            <person name="Parkhill J."/>
            <person name="Wren B.W."/>
            <person name="Thomson N.R."/>
            <person name="Titball R.W."/>
            <person name="Holden M.T.G."/>
            <person name="Prentice M.B."/>
            <person name="Sebaihia M."/>
            <person name="James K.D."/>
            <person name="Churcher C.M."/>
            <person name="Mungall K.L."/>
            <person name="Baker S."/>
            <person name="Basham D."/>
            <person name="Bentley S.D."/>
            <person name="Brooks K."/>
            <person name="Cerdeno-Tarraga A.-M."/>
            <person name="Chillingworth T."/>
            <person name="Cronin A."/>
            <person name="Davies R.M."/>
            <person name="Davis P."/>
            <person name="Dougan G."/>
            <person name="Feltwell T."/>
            <person name="Hamlin N."/>
            <person name="Holroyd S."/>
            <person name="Jagels K."/>
            <person name="Karlyshev A.V."/>
            <person name="Leather S."/>
            <person name="Moule S."/>
            <person name="Oyston P.C.F."/>
            <person name="Quail M.A."/>
            <person name="Rutherford K.M."/>
            <person name="Simmonds M."/>
            <person name="Skelton J."/>
            <person name="Stevens K."/>
            <person name="Whitehead S."/>
            <person name="Barrell B.G."/>
        </authorList>
    </citation>
    <scope>NUCLEOTIDE SEQUENCE [LARGE SCALE GENOMIC DNA]</scope>
    <source>
        <strain>CO-92 / Biovar Orientalis</strain>
    </source>
</reference>
<reference key="2">
    <citation type="journal article" date="2002" name="J. Bacteriol.">
        <title>Genome sequence of Yersinia pestis KIM.</title>
        <authorList>
            <person name="Deng W."/>
            <person name="Burland V."/>
            <person name="Plunkett G. III"/>
            <person name="Boutin A."/>
            <person name="Mayhew G.F."/>
            <person name="Liss P."/>
            <person name="Perna N.T."/>
            <person name="Rose D.J."/>
            <person name="Mau B."/>
            <person name="Zhou S."/>
            <person name="Schwartz D.C."/>
            <person name="Fetherston J.D."/>
            <person name="Lindler L.E."/>
            <person name="Brubaker R.R."/>
            <person name="Plano G.V."/>
            <person name="Straley S.C."/>
            <person name="McDonough K.A."/>
            <person name="Nilles M.L."/>
            <person name="Matson J.S."/>
            <person name="Blattner F.R."/>
            <person name="Perry R.D."/>
        </authorList>
    </citation>
    <scope>NUCLEOTIDE SEQUENCE [LARGE SCALE GENOMIC DNA]</scope>
    <source>
        <strain>KIM10+ / Biovar Mediaevalis</strain>
    </source>
</reference>
<reference key="3">
    <citation type="journal article" date="2004" name="DNA Res.">
        <title>Complete genome sequence of Yersinia pestis strain 91001, an isolate avirulent to humans.</title>
        <authorList>
            <person name="Song Y."/>
            <person name="Tong Z."/>
            <person name="Wang J."/>
            <person name="Wang L."/>
            <person name="Guo Z."/>
            <person name="Han Y."/>
            <person name="Zhang J."/>
            <person name="Pei D."/>
            <person name="Zhou D."/>
            <person name="Qin H."/>
            <person name="Pang X."/>
            <person name="Han Y."/>
            <person name="Zhai J."/>
            <person name="Li M."/>
            <person name="Cui B."/>
            <person name="Qi Z."/>
            <person name="Jin L."/>
            <person name="Dai R."/>
            <person name="Chen F."/>
            <person name="Li S."/>
            <person name="Ye C."/>
            <person name="Du Z."/>
            <person name="Lin W."/>
            <person name="Wang J."/>
            <person name="Yu J."/>
            <person name="Yang H."/>
            <person name="Wang J."/>
            <person name="Huang P."/>
            <person name="Yang R."/>
        </authorList>
    </citation>
    <scope>NUCLEOTIDE SEQUENCE [LARGE SCALE GENOMIC DNA]</scope>
    <source>
        <strain>91001 / Biovar Mediaevalis</strain>
    </source>
</reference>